<reference key="1">
    <citation type="submission" date="2004-08" db="EMBL/GenBank/DDBJ databases">
        <authorList>
            <consortium name="NIH - Xenopus Gene Collection (XGC) project"/>
        </authorList>
    </citation>
    <scope>NUCLEOTIDE SEQUENCE [LARGE SCALE MRNA]</scope>
    <source>
        <tissue>Eye</tissue>
    </source>
</reference>
<keyword id="KW-0067">ATP-binding</keyword>
<keyword id="KW-0963">Cytoplasm</keyword>
<keyword id="KW-0418">Kinase</keyword>
<keyword id="KW-0460">Magnesium</keyword>
<keyword id="KW-0547">Nucleotide-binding</keyword>
<keyword id="KW-0597">Phosphoprotein</keyword>
<keyword id="KW-1185">Reference proteome</keyword>
<keyword id="KW-0723">Serine/threonine-protein kinase</keyword>
<keyword id="KW-0808">Transferase</keyword>
<protein>
    <recommendedName>
        <fullName>Microtubule-associated serine/threonine-protein kinase 3</fullName>
        <ecNumber>2.7.11.1</ecNumber>
    </recommendedName>
</protein>
<feature type="chain" id="PRO_0000277824" description="Microtubule-associated serine/threonine-protein kinase 3">
    <location>
        <begin position="1"/>
        <end position="1482"/>
    </location>
</feature>
<feature type="domain" description="Protein kinase" evidence="4">
    <location>
        <begin position="399"/>
        <end position="672"/>
    </location>
</feature>
<feature type="domain" description="AGC-kinase C-terminal" evidence="5">
    <location>
        <begin position="673"/>
        <end position="745"/>
    </location>
</feature>
<feature type="domain" description="PDZ" evidence="3">
    <location>
        <begin position="968"/>
        <end position="1058"/>
    </location>
</feature>
<feature type="region of interest" description="Disordered" evidence="7">
    <location>
        <begin position="1"/>
        <end position="87"/>
    </location>
</feature>
<feature type="region of interest" description="Disordered" evidence="7">
    <location>
        <begin position="116"/>
        <end position="143"/>
    </location>
</feature>
<feature type="region of interest" description="Disordered" evidence="7">
    <location>
        <begin position="163"/>
        <end position="191"/>
    </location>
</feature>
<feature type="region of interest" description="Disordered" evidence="7">
    <location>
        <begin position="755"/>
        <end position="810"/>
    </location>
</feature>
<feature type="region of interest" description="Disordered" evidence="7">
    <location>
        <begin position="830"/>
        <end position="915"/>
    </location>
</feature>
<feature type="region of interest" description="Disordered" evidence="7">
    <location>
        <begin position="936"/>
        <end position="965"/>
    </location>
</feature>
<feature type="region of interest" description="Disordered" evidence="7">
    <location>
        <begin position="1061"/>
        <end position="1266"/>
    </location>
</feature>
<feature type="region of interest" description="Disordered" evidence="7">
    <location>
        <begin position="1449"/>
        <end position="1482"/>
    </location>
</feature>
<feature type="compositionally biased region" description="Low complexity" evidence="7">
    <location>
        <begin position="23"/>
        <end position="39"/>
    </location>
</feature>
<feature type="compositionally biased region" description="Low complexity" evidence="7">
    <location>
        <begin position="59"/>
        <end position="74"/>
    </location>
</feature>
<feature type="compositionally biased region" description="Polar residues" evidence="7">
    <location>
        <begin position="75"/>
        <end position="87"/>
    </location>
</feature>
<feature type="compositionally biased region" description="Polar residues" evidence="7">
    <location>
        <begin position="117"/>
        <end position="128"/>
    </location>
</feature>
<feature type="compositionally biased region" description="Low complexity" evidence="7">
    <location>
        <begin position="129"/>
        <end position="138"/>
    </location>
</feature>
<feature type="compositionally biased region" description="Low complexity" evidence="7">
    <location>
        <begin position="175"/>
        <end position="187"/>
    </location>
</feature>
<feature type="compositionally biased region" description="Basic and acidic residues" evidence="7">
    <location>
        <begin position="759"/>
        <end position="792"/>
    </location>
</feature>
<feature type="compositionally biased region" description="Low complexity" evidence="7">
    <location>
        <begin position="793"/>
        <end position="810"/>
    </location>
</feature>
<feature type="compositionally biased region" description="Low complexity" evidence="7">
    <location>
        <begin position="866"/>
        <end position="877"/>
    </location>
</feature>
<feature type="compositionally biased region" description="Polar residues" evidence="7">
    <location>
        <begin position="904"/>
        <end position="915"/>
    </location>
</feature>
<feature type="compositionally biased region" description="Basic residues" evidence="7">
    <location>
        <begin position="1070"/>
        <end position="1085"/>
    </location>
</feature>
<feature type="compositionally biased region" description="Low complexity" evidence="7">
    <location>
        <begin position="1109"/>
        <end position="1129"/>
    </location>
</feature>
<feature type="compositionally biased region" description="Low complexity" evidence="7">
    <location>
        <begin position="1155"/>
        <end position="1169"/>
    </location>
</feature>
<feature type="compositionally biased region" description="Low complexity" evidence="7">
    <location>
        <begin position="1218"/>
        <end position="1232"/>
    </location>
</feature>
<feature type="compositionally biased region" description="Polar residues" evidence="7">
    <location>
        <begin position="1242"/>
        <end position="1256"/>
    </location>
</feature>
<feature type="active site" description="Proton acceptor" evidence="4 6">
    <location>
        <position position="522"/>
    </location>
</feature>
<feature type="binding site" evidence="4">
    <location>
        <begin position="405"/>
        <end position="413"/>
    </location>
    <ligand>
        <name>ATP</name>
        <dbReference type="ChEBI" id="CHEBI:30616"/>
    </ligand>
</feature>
<feature type="binding site" evidence="4">
    <location>
        <position position="428"/>
    </location>
    <ligand>
        <name>ATP</name>
        <dbReference type="ChEBI" id="CHEBI:30616"/>
    </ligand>
</feature>
<accession>Q6AX33</accession>
<gene>
    <name type="primary">mast3</name>
</gene>
<proteinExistence type="evidence at transcript level"/>
<sequence length="1482" mass="164805">MKSRRDKLKIPSLTLDLSPNNQSPTLLSPCSPCSPNSPLQTLHPWSCRSSNRKSLVVGSPSPTLSRPLSPLSVPTAGSSPLDSPRNFSTSASVNFPFARSHGPRADRADGRRWSLASLPSSGYGTNTPSSTLSSSSSSQERLHQLPFQPTADELHFLSKHFRSTESVTDDDGRRSPCMRPRSRSLSPGRASSNFDNEIIMMNHVYKERFPKATAQMEERLQDIITHFCPSQTLPLADGVLGFIHHQIIELARDCLDKSKGALITSRYFLELQEKLEKMLQDAHNRSESEEVMFINHLARKLLMVIARPGRLLECLEFDPEQFYHLLEAAEGQAKVGQGIKTDIPRYIISQLGLTKDPLEEIVQLDHYDTESSLQLDQEDYHDPYIPSTPSRKKPCESDFETIKLISNGAYGAVYLVRHKETRQRFAMKKINKQNLILRNQIHQVFVERDILTFAENPFVVSMFCSFETRRHLCMVMEYVEGGDCATLLKNMGPLPVDMSRMYFAETVLALEYLHNYGIVHRDLKPDNLLITSLGHIKLTDFGLSKVGLMNMTTNLYEGHIEKDTREFLDKQVCGTPEYIAPEVILRQGYGKPVDWWAMGIILYEFLVGCVPFFGDTPEELFGQVISDDIIWPGGEEALPADSQDLITRLLRQNSLERLGTGGAQEVKQHTFFLSLDWNGLLRQKAEFVPQLEADDDTSYFDTRSERYHHLASEEDEETNDDESSVEIRQFSSCSHRFSKVYSSSEHLATQLNLSFSSTERSHSDEKEEHGDRWERTLSTEEEKNRLGAETRLRSWTSSGSSHHSWLSERSASPNVLTSTCSLDTMPRFAFSSEEESSDHKPERPTFTLGEIKGTPPKPTSLCDIVSLSRTRLRSNSTGAKNSTPRPLEAGVSRRLRGHRETPEKQSSSTGSRVPKSASVSALSLIITSDDFGSGSLASPISPRSLSSNPSSRDSSPSRESSVAVSSLRPPIIIHSSGKKYGFTLRAIRVYMGESDVYTVHHMVWNVEDGSPAHEAGLRAGDLITHVNGESVLGLVHMDVVELLLKSGSKVSLRTTPLENTSIKIGPARKNSCKGRMARRTKKSRKRENQDRKRSLFKKISKQSTVLQTSRSFSSGLHQSLSSSESLPASPTHSLSPGPITPSRSPAPDAAGDAVSPQSTSPCSSTPSSPAGHIRPSSLQCLTPKLSGQRYKVGRRKSTSSIPPSPLACTPSPVPQQPSSPQRSPSPLLPSHPRSGHCGLQGKTLSPPTIVRQSSRNRATEAPRSPLLKRVQSVEKMAAYLSSGRKASPVDIQHWEDTVDALEAMSESRNRDWGAEKHERDTEVVVMRRLNLSERRDSFKKQEAVQEVSFDEPDAGAVELVPEDKKTARCSGLWERLPHQTSWIQARTGISTPVTTEQETSCRLVPQIAVQTSESDEQEKSQGVWECQGFYPLQLSGKDKCPLVTLLSEPTGATSDRSQLKSEKISECPAPFALSSKRDSKKN</sequence>
<evidence type="ECO:0000250" key="1"/>
<evidence type="ECO:0000250" key="2">
    <source>
        <dbReference type="UniProtKB" id="Q3U214"/>
    </source>
</evidence>
<evidence type="ECO:0000255" key="3">
    <source>
        <dbReference type="PROSITE-ProRule" id="PRU00143"/>
    </source>
</evidence>
<evidence type="ECO:0000255" key="4">
    <source>
        <dbReference type="PROSITE-ProRule" id="PRU00159"/>
    </source>
</evidence>
<evidence type="ECO:0000255" key="5">
    <source>
        <dbReference type="PROSITE-ProRule" id="PRU00618"/>
    </source>
</evidence>
<evidence type="ECO:0000255" key="6">
    <source>
        <dbReference type="PROSITE-ProRule" id="PRU10027"/>
    </source>
</evidence>
<evidence type="ECO:0000256" key="7">
    <source>
        <dbReference type="SAM" id="MobiDB-lite"/>
    </source>
</evidence>
<evidence type="ECO:0000305" key="8"/>
<dbReference type="EC" id="2.7.11.1"/>
<dbReference type="EMBL" id="BC079780">
    <property type="protein sequence ID" value="AAH79780.1"/>
    <property type="molecule type" value="mRNA"/>
</dbReference>
<dbReference type="RefSeq" id="NP_001087433.1">
    <property type="nucleotide sequence ID" value="NM_001093964.1"/>
</dbReference>
<dbReference type="SMR" id="Q6AX33"/>
<dbReference type="GeneID" id="447257"/>
<dbReference type="KEGG" id="xla:447257"/>
<dbReference type="AGR" id="Xenbase:XB-GENE-5928389"/>
<dbReference type="CTD" id="447257"/>
<dbReference type="Xenbase" id="XB-GENE-5928389">
    <property type="gene designation" value="mast3.L"/>
</dbReference>
<dbReference type="OrthoDB" id="10070999at2759"/>
<dbReference type="Proteomes" id="UP000186698">
    <property type="component" value="Chromosome 1L"/>
</dbReference>
<dbReference type="Bgee" id="447257">
    <property type="expression patterns" value="Expressed in blastula and 18 other cell types or tissues"/>
</dbReference>
<dbReference type="GO" id="GO:0005737">
    <property type="term" value="C:cytoplasm"/>
    <property type="evidence" value="ECO:0007669"/>
    <property type="project" value="UniProtKB-SubCell"/>
</dbReference>
<dbReference type="GO" id="GO:0005524">
    <property type="term" value="F:ATP binding"/>
    <property type="evidence" value="ECO:0007669"/>
    <property type="project" value="UniProtKB-KW"/>
</dbReference>
<dbReference type="GO" id="GO:0000287">
    <property type="term" value="F:magnesium ion binding"/>
    <property type="evidence" value="ECO:0007669"/>
    <property type="project" value="InterPro"/>
</dbReference>
<dbReference type="GO" id="GO:0106310">
    <property type="term" value="F:protein serine kinase activity"/>
    <property type="evidence" value="ECO:0007669"/>
    <property type="project" value="RHEA"/>
</dbReference>
<dbReference type="GO" id="GO:0004674">
    <property type="term" value="F:protein serine/threonine kinase activity"/>
    <property type="evidence" value="ECO:0000318"/>
    <property type="project" value="GO_Central"/>
</dbReference>
<dbReference type="GO" id="GO:0007010">
    <property type="term" value="P:cytoskeleton organization"/>
    <property type="evidence" value="ECO:0000318"/>
    <property type="project" value="GO_Central"/>
</dbReference>
<dbReference type="GO" id="GO:0035556">
    <property type="term" value="P:intracellular signal transduction"/>
    <property type="evidence" value="ECO:0000318"/>
    <property type="project" value="GO_Central"/>
</dbReference>
<dbReference type="CDD" id="cd23075">
    <property type="entry name" value="PDZ_MAST3"/>
    <property type="match status" value="1"/>
</dbReference>
<dbReference type="CDD" id="cd05609">
    <property type="entry name" value="STKc_MAST"/>
    <property type="match status" value="1"/>
</dbReference>
<dbReference type="FunFam" id="3.30.200.20:FF:000457">
    <property type="entry name" value="Microtubule-associated serine/threonine-protein kinase"/>
    <property type="match status" value="1"/>
</dbReference>
<dbReference type="FunFam" id="1.10.510.10:FF:000012">
    <property type="entry name" value="microtubule-associated serine/threonine-protein kinase 2 isoform X1"/>
    <property type="match status" value="1"/>
</dbReference>
<dbReference type="FunFam" id="1.20.1480.20:FF:000001">
    <property type="entry name" value="microtubule-associated serine/threonine-protein kinase 4 isoform X1"/>
    <property type="match status" value="1"/>
</dbReference>
<dbReference type="FunFam" id="2.30.42.10:FF:000008">
    <property type="entry name" value="microtubule-associated serine/threonine-protein kinase 4 isoform X2"/>
    <property type="match status" value="1"/>
</dbReference>
<dbReference type="Gene3D" id="2.30.42.10">
    <property type="match status" value="1"/>
</dbReference>
<dbReference type="Gene3D" id="1.20.1480.20">
    <property type="entry name" value="MAST3 pre-PK domain-like"/>
    <property type="match status" value="1"/>
</dbReference>
<dbReference type="Gene3D" id="3.30.200.20">
    <property type="entry name" value="Phosphorylase Kinase, domain 1"/>
    <property type="match status" value="1"/>
</dbReference>
<dbReference type="Gene3D" id="1.10.510.10">
    <property type="entry name" value="Transferase(Phosphotransferase) domain 1"/>
    <property type="match status" value="1"/>
</dbReference>
<dbReference type="InterPro" id="IPR000961">
    <property type="entry name" value="AGC-kinase_C"/>
</dbReference>
<dbReference type="InterPro" id="IPR011009">
    <property type="entry name" value="Kinase-like_dom_sf"/>
</dbReference>
<dbReference type="InterPro" id="IPR037711">
    <property type="entry name" value="MAST"/>
</dbReference>
<dbReference type="InterPro" id="IPR015022">
    <property type="entry name" value="MAST_pre-PK_dom"/>
</dbReference>
<dbReference type="InterPro" id="IPR023142">
    <property type="entry name" value="MAST_pre-PK_dom_sf"/>
</dbReference>
<dbReference type="InterPro" id="IPR001478">
    <property type="entry name" value="PDZ"/>
</dbReference>
<dbReference type="InterPro" id="IPR041489">
    <property type="entry name" value="PDZ_6"/>
</dbReference>
<dbReference type="InterPro" id="IPR036034">
    <property type="entry name" value="PDZ_sf"/>
</dbReference>
<dbReference type="InterPro" id="IPR000719">
    <property type="entry name" value="Prot_kinase_dom"/>
</dbReference>
<dbReference type="InterPro" id="IPR008271">
    <property type="entry name" value="Ser/Thr_kinase_AS"/>
</dbReference>
<dbReference type="InterPro" id="IPR050236">
    <property type="entry name" value="Ser_Thr_kinase_AGC"/>
</dbReference>
<dbReference type="PANTHER" id="PTHR24356:SF140">
    <property type="entry name" value="MICROTUBULE-ASSOCIATED SERINE_THREONINE-PROTEIN KINASE 3"/>
    <property type="match status" value="1"/>
</dbReference>
<dbReference type="PANTHER" id="PTHR24356">
    <property type="entry name" value="SERINE/THREONINE-PROTEIN KINASE"/>
    <property type="match status" value="1"/>
</dbReference>
<dbReference type="Pfam" id="PF08926">
    <property type="entry name" value="DUF1908"/>
    <property type="match status" value="1"/>
</dbReference>
<dbReference type="Pfam" id="PF17820">
    <property type="entry name" value="PDZ_6"/>
    <property type="match status" value="1"/>
</dbReference>
<dbReference type="Pfam" id="PF00069">
    <property type="entry name" value="Pkinase"/>
    <property type="match status" value="1"/>
</dbReference>
<dbReference type="SMART" id="SM00228">
    <property type="entry name" value="PDZ"/>
    <property type="match status" value="1"/>
</dbReference>
<dbReference type="SMART" id="SM00220">
    <property type="entry name" value="S_TKc"/>
    <property type="match status" value="1"/>
</dbReference>
<dbReference type="SUPFAM" id="SSF140482">
    <property type="entry name" value="MAST3 pre-PK domain-like"/>
    <property type="match status" value="1"/>
</dbReference>
<dbReference type="SUPFAM" id="SSF50156">
    <property type="entry name" value="PDZ domain-like"/>
    <property type="match status" value="1"/>
</dbReference>
<dbReference type="SUPFAM" id="SSF56112">
    <property type="entry name" value="Protein kinase-like (PK-like)"/>
    <property type="match status" value="1"/>
</dbReference>
<dbReference type="PROSITE" id="PS51285">
    <property type="entry name" value="AGC_KINASE_CTER"/>
    <property type="match status" value="1"/>
</dbReference>
<dbReference type="PROSITE" id="PS50106">
    <property type="entry name" value="PDZ"/>
    <property type="match status" value="1"/>
</dbReference>
<dbReference type="PROSITE" id="PS50011">
    <property type="entry name" value="PROTEIN_KINASE_DOM"/>
    <property type="match status" value="1"/>
</dbReference>
<dbReference type="PROSITE" id="PS00108">
    <property type="entry name" value="PROTEIN_KINASE_ST"/>
    <property type="match status" value="1"/>
</dbReference>
<name>MAST3_XENLA</name>
<comment type="catalytic activity">
    <reaction>
        <text>L-seryl-[protein] + ATP = O-phospho-L-seryl-[protein] + ADP + H(+)</text>
        <dbReference type="Rhea" id="RHEA:17989"/>
        <dbReference type="Rhea" id="RHEA-COMP:9863"/>
        <dbReference type="Rhea" id="RHEA-COMP:11604"/>
        <dbReference type="ChEBI" id="CHEBI:15378"/>
        <dbReference type="ChEBI" id="CHEBI:29999"/>
        <dbReference type="ChEBI" id="CHEBI:30616"/>
        <dbReference type="ChEBI" id="CHEBI:83421"/>
        <dbReference type="ChEBI" id="CHEBI:456216"/>
        <dbReference type="EC" id="2.7.11.1"/>
    </reaction>
</comment>
<comment type="catalytic activity">
    <reaction>
        <text>L-threonyl-[protein] + ATP = O-phospho-L-threonyl-[protein] + ADP + H(+)</text>
        <dbReference type="Rhea" id="RHEA:46608"/>
        <dbReference type="Rhea" id="RHEA-COMP:11060"/>
        <dbReference type="Rhea" id="RHEA-COMP:11605"/>
        <dbReference type="ChEBI" id="CHEBI:15378"/>
        <dbReference type="ChEBI" id="CHEBI:30013"/>
        <dbReference type="ChEBI" id="CHEBI:30616"/>
        <dbReference type="ChEBI" id="CHEBI:61977"/>
        <dbReference type="ChEBI" id="CHEBI:456216"/>
        <dbReference type="EC" id="2.7.11.1"/>
    </reaction>
</comment>
<comment type="cofactor">
    <cofactor evidence="1">
        <name>Mg(2+)</name>
        <dbReference type="ChEBI" id="CHEBI:18420"/>
    </cofactor>
</comment>
<comment type="subcellular location">
    <subcellularLocation>
        <location evidence="2">Cytoplasm</location>
    </subcellularLocation>
</comment>
<comment type="similarity">
    <text evidence="8">Belongs to the protein kinase superfamily. AGC Ser/Thr protein kinase family.</text>
</comment>
<organism>
    <name type="scientific">Xenopus laevis</name>
    <name type="common">African clawed frog</name>
    <dbReference type="NCBI Taxonomy" id="8355"/>
    <lineage>
        <taxon>Eukaryota</taxon>
        <taxon>Metazoa</taxon>
        <taxon>Chordata</taxon>
        <taxon>Craniata</taxon>
        <taxon>Vertebrata</taxon>
        <taxon>Euteleostomi</taxon>
        <taxon>Amphibia</taxon>
        <taxon>Batrachia</taxon>
        <taxon>Anura</taxon>
        <taxon>Pipoidea</taxon>
        <taxon>Pipidae</taxon>
        <taxon>Xenopodinae</taxon>
        <taxon>Xenopus</taxon>
        <taxon>Xenopus</taxon>
    </lineage>
</organism>